<reference key="1">
    <citation type="journal article" date="2000" name="Nucleic Acids Res.">
        <title>Complete genome sequence of the alkaliphilic bacterium Bacillus halodurans and genomic sequence comparison with Bacillus subtilis.</title>
        <authorList>
            <person name="Takami H."/>
            <person name="Nakasone K."/>
            <person name="Takaki Y."/>
            <person name="Maeno G."/>
            <person name="Sasaki R."/>
            <person name="Masui N."/>
            <person name="Fuji F."/>
            <person name="Hirama C."/>
            <person name="Nakamura Y."/>
            <person name="Ogasawara N."/>
            <person name="Kuhara S."/>
            <person name="Horikoshi K."/>
        </authorList>
    </citation>
    <scope>NUCLEOTIDE SEQUENCE [LARGE SCALE GENOMIC DNA]</scope>
    <source>
        <strain>ATCC BAA-125 / DSM 18197 / FERM 7344 / JCM 9153 / C-125</strain>
    </source>
</reference>
<accession>Q9K842</accession>
<evidence type="ECO:0000255" key="1">
    <source>
        <dbReference type="HAMAP-Rule" id="MF_00823"/>
    </source>
</evidence>
<evidence type="ECO:0000255" key="2">
    <source>
        <dbReference type="PROSITE-ProRule" id="PRU01137"/>
    </source>
</evidence>
<name>ACCA_HALH5</name>
<dbReference type="EC" id="2.1.3.15" evidence="1"/>
<dbReference type="EMBL" id="BA000004">
    <property type="protein sequence ID" value="BAB06884.1"/>
    <property type="molecule type" value="Genomic_DNA"/>
</dbReference>
<dbReference type="PIR" id="E84045">
    <property type="entry name" value="E84045"/>
</dbReference>
<dbReference type="RefSeq" id="WP_010899308.1">
    <property type="nucleotide sequence ID" value="NC_002570.2"/>
</dbReference>
<dbReference type="SMR" id="Q9K842"/>
<dbReference type="STRING" id="272558.gene:10729077"/>
<dbReference type="DNASU" id="893744"/>
<dbReference type="KEGG" id="bha:BH3165"/>
<dbReference type="eggNOG" id="COG0825">
    <property type="taxonomic scope" value="Bacteria"/>
</dbReference>
<dbReference type="HOGENOM" id="CLU_015486_0_2_9"/>
<dbReference type="OrthoDB" id="9808023at2"/>
<dbReference type="UniPathway" id="UPA00655">
    <property type="reaction ID" value="UER00711"/>
</dbReference>
<dbReference type="Proteomes" id="UP000001258">
    <property type="component" value="Chromosome"/>
</dbReference>
<dbReference type="GO" id="GO:0009317">
    <property type="term" value="C:acetyl-CoA carboxylase complex"/>
    <property type="evidence" value="ECO:0007669"/>
    <property type="project" value="InterPro"/>
</dbReference>
<dbReference type="GO" id="GO:0003989">
    <property type="term" value="F:acetyl-CoA carboxylase activity"/>
    <property type="evidence" value="ECO:0007669"/>
    <property type="project" value="InterPro"/>
</dbReference>
<dbReference type="GO" id="GO:0005524">
    <property type="term" value="F:ATP binding"/>
    <property type="evidence" value="ECO:0007669"/>
    <property type="project" value="UniProtKB-KW"/>
</dbReference>
<dbReference type="GO" id="GO:0016743">
    <property type="term" value="F:carboxyl- or carbamoyltransferase activity"/>
    <property type="evidence" value="ECO:0007669"/>
    <property type="project" value="UniProtKB-UniRule"/>
</dbReference>
<dbReference type="GO" id="GO:0006633">
    <property type="term" value="P:fatty acid biosynthetic process"/>
    <property type="evidence" value="ECO:0007669"/>
    <property type="project" value="UniProtKB-KW"/>
</dbReference>
<dbReference type="GO" id="GO:2001295">
    <property type="term" value="P:malonyl-CoA biosynthetic process"/>
    <property type="evidence" value="ECO:0007669"/>
    <property type="project" value="UniProtKB-UniRule"/>
</dbReference>
<dbReference type="Gene3D" id="3.90.226.10">
    <property type="entry name" value="2-enoyl-CoA Hydratase, Chain A, domain 1"/>
    <property type="match status" value="1"/>
</dbReference>
<dbReference type="HAMAP" id="MF_00823">
    <property type="entry name" value="AcetylCoA_CT_alpha"/>
    <property type="match status" value="1"/>
</dbReference>
<dbReference type="InterPro" id="IPR001095">
    <property type="entry name" value="Acetyl_CoA_COase_a_su"/>
</dbReference>
<dbReference type="InterPro" id="IPR029045">
    <property type="entry name" value="ClpP/crotonase-like_dom_sf"/>
</dbReference>
<dbReference type="InterPro" id="IPR011763">
    <property type="entry name" value="COA_CT_C"/>
</dbReference>
<dbReference type="NCBIfam" id="TIGR00513">
    <property type="entry name" value="accA"/>
    <property type="match status" value="1"/>
</dbReference>
<dbReference type="NCBIfam" id="NF041504">
    <property type="entry name" value="AccA_sub"/>
    <property type="match status" value="1"/>
</dbReference>
<dbReference type="NCBIfam" id="NF004344">
    <property type="entry name" value="PRK05724.1"/>
    <property type="match status" value="1"/>
</dbReference>
<dbReference type="PANTHER" id="PTHR42853">
    <property type="entry name" value="ACETYL-COENZYME A CARBOXYLASE CARBOXYL TRANSFERASE SUBUNIT ALPHA"/>
    <property type="match status" value="1"/>
</dbReference>
<dbReference type="PANTHER" id="PTHR42853:SF3">
    <property type="entry name" value="ACETYL-COENZYME A CARBOXYLASE CARBOXYL TRANSFERASE SUBUNIT ALPHA, CHLOROPLASTIC"/>
    <property type="match status" value="1"/>
</dbReference>
<dbReference type="Pfam" id="PF03255">
    <property type="entry name" value="ACCA"/>
    <property type="match status" value="1"/>
</dbReference>
<dbReference type="PRINTS" id="PR01069">
    <property type="entry name" value="ACCCTRFRASEA"/>
</dbReference>
<dbReference type="SUPFAM" id="SSF52096">
    <property type="entry name" value="ClpP/crotonase"/>
    <property type="match status" value="1"/>
</dbReference>
<dbReference type="PROSITE" id="PS50989">
    <property type="entry name" value="COA_CT_CTER"/>
    <property type="match status" value="1"/>
</dbReference>
<gene>
    <name evidence="1" type="primary">accA</name>
    <name type="ordered locus">BH3165</name>
</gene>
<feature type="chain" id="PRO_0000223733" description="Acetyl-coenzyme A carboxylase carboxyl transferase subunit alpha">
    <location>
        <begin position="1"/>
        <end position="325"/>
    </location>
</feature>
<feature type="domain" description="CoA carboxyltransferase C-terminal" evidence="2">
    <location>
        <begin position="38"/>
        <end position="292"/>
    </location>
</feature>
<proteinExistence type="inferred from homology"/>
<comment type="function">
    <text evidence="1">Component of the acetyl coenzyme A carboxylase (ACC) complex. First, biotin carboxylase catalyzes the carboxylation of biotin on its carrier protein (BCCP) and then the CO(2) group is transferred by the carboxyltransferase to acetyl-CoA to form malonyl-CoA.</text>
</comment>
<comment type="catalytic activity">
    <reaction evidence="1">
        <text>N(6)-carboxybiotinyl-L-lysyl-[protein] + acetyl-CoA = N(6)-biotinyl-L-lysyl-[protein] + malonyl-CoA</text>
        <dbReference type="Rhea" id="RHEA:54728"/>
        <dbReference type="Rhea" id="RHEA-COMP:10505"/>
        <dbReference type="Rhea" id="RHEA-COMP:10506"/>
        <dbReference type="ChEBI" id="CHEBI:57288"/>
        <dbReference type="ChEBI" id="CHEBI:57384"/>
        <dbReference type="ChEBI" id="CHEBI:83144"/>
        <dbReference type="ChEBI" id="CHEBI:83145"/>
        <dbReference type="EC" id="2.1.3.15"/>
    </reaction>
</comment>
<comment type="pathway">
    <text evidence="1">Lipid metabolism; malonyl-CoA biosynthesis; malonyl-CoA from acetyl-CoA: step 1/1.</text>
</comment>
<comment type="subunit">
    <text evidence="1">Acetyl-CoA carboxylase is a heterohexamer composed of biotin carboxyl carrier protein (AccB), biotin carboxylase (AccC) and two subunits each of ACCase subunit alpha (AccA) and ACCase subunit beta (AccD).</text>
</comment>
<comment type="subcellular location">
    <subcellularLocation>
        <location evidence="1">Cytoplasm</location>
    </subcellularLocation>
</comment>
<comment type="similarity">
    <text evidence="1">Belongs to the AccA family.</text>
</comment>
<organism>
    <name type="scientific">Halalkalibacterium halodurans (strain ATCC BAA-125 / DSM 18197 / FERM 7344 / JCM 9153 / C-125)</name>
    <name type="common">Bacillus halodurans</name>
    <dbReference type="NCBI Taxonomy" id="272558"/>
    <lineage>
        <taxon>Bacteria</taxon>
        <taxon>Bacillati</taxon>
        <taxon>Bacillota</taxon>
        <taxon>Bacilli</taxon>
        <taxon>Bacillales</taxon>
        <taxon>Bacillaceae</taxon>
        <taxon>Halalkalibacterium (ex Joshi et al. 2022)</taxon>
    </lineage>
</organism>
<protein>
    <recommendedName>
        <fullName evidence="1">Acetyl-coenzyme A carboxylase carboxyl transferase subunit alpha</fullName>
        <shortName evidence="1">ACCase subunit alpha</shortName>
        <shortName evidence="1">Acetyl-CoA carboxylase carboxyltransferase subunit alpha</shortName>
        <ecNumber evidence="1">2.1.3.15</ecNumber>
    </recommendedName>
</protein>
<keyword id="KW-0067">ATP-binding</keyword>
<keyword id="KW-0963">Cytoplasm</keyword>
<keyword id="KW-0275">Fatty acid biosynthesis</keyword>
<keyword id="KW-0276">Fatty acid metabolism</keyword>
<keyword id="KW-0444">Lipid biosynthesis</keyword>
<keyword id="KW-0443">Lipid metabolism</keyword>
<keyword id="KW-0547">Nucleotide-binding</keyword>
<keyword id="KW-1185">Reference proteome</keyword>
<keyword id="KW-0808">Transferase</keyword>
<sequence>MSTELDFEKPIRDLKGKIEELRTFTEEKEIDLSDEIEKLEKRLHALEENIYGNLKPWQRVQIARHGERPTTLDYIEQLFSDFLEMHGDRLYGDDEAIVAGIAKYKGQPVTVIGHQRGKDTKENIRRNFGMPHPEGYRKALRLMKQAEKFHRPVICFIDTKGAYPGKAAEERGQSEAIARNLLEMAGLKVPIVCIVIGEGGSGGALALGVGDRIHMLENSTYSVISPEGAAALLWKDASQAQRAAETMKITAPDLKELQIIDDIIPEVRGGAHRNVAEQAEAIDQVLEKSLKQLSSLTTEELLNKRYEKYKKIGEFSHVNDAISVN</sequence>